<comment type="function">
    <text evidence="2">As accessory component of the DNA polymerase epsilon (DNA polymerase II) participates in chromosomal DNA replication.</text>
</comment>
<comment type="subunit">
    <text evidence="1">Heterotetramer. Consists of four subunits: POL2, DPB2, DPB3 and DPB4 (By similarity).</text>
</comment>
<comment type="subcellular location">
    <subcellularLocation>
        <location evidence="1">Nucleus</location>
    </subcellularLocation>
</comment>
<comment type="miscellaneous">
    <text>In eukaryotes there are five DNA polymerases: alpha, beta, gamma, delta, and epsilon which are responsible for different reactions of DNA synthesis.</text>
</comment>
<comment type="similarity">
    <text evidence="4">Belongs to the DNA polymerase epsilon subunit B family.</text>
</comment>
<sequence length="710" mass="80465">MAGVVLPASIQPQLLRPLAYRILTKKFGLNIKSDGLVALAAYIGTVFGLYWRQNSETTKFLEQFAIIWREQGRGLFVDELNVSQVINEIKEREKIEQDQHVEKRNNLHKANNLDAFLKRPNSPTDTEITTLSQGSATSVVNPDSHSPMMLEEGSPINSDSEPISEHERANGISNVDQQLDWLDYFKVIDAFNQQTFTYDHTKRQYIYVPRPKEVEKNMLSIAKLKLPNVESKVSLFTTRYHIIKDKVLRNEKFQNNDIFNPLSSIIEMGKHMNESDVSPLNSASYMKITQIKNLLGHDGKNFLLLGLLDQNSKGNWSLEDPSGSIELHLQQAIPTKGTYYVPGCIVLVEGIYYTASNTFVVSSITHPPGEKREDTIEAIGNLDLLGAYNPSNENYVARLDKDLKIRLHYLEQELSDNKFVILGGDIYLDEMTTMDGLKKTFDKLTTDPPVAIVFNGSFVSVPVHPSLNAKNVSATVSYKNNFDALATLLSNYENLINDTHMIFIPGPNDPWTSMVGLGTTTMWPQKIIPSSFTQKMSRICRKVHWGSNPLRIAYLSQEIVLTRDDLANRFKRYNIVFPTVEEEKYLENAELQEQYSRNPDVSVGQLIAFKNNLPVSVLESRKLVKTLLDQQHLSPFSSRIRPTVWDLDFTLQLSPLPSSIMLCDTSAPAFDVTYNGCKTINPGRFIHKRAAKYIEFFPASKVLVEEELPF</sequence>
<evidence type="ECO:0000250" key="1"/>
<evidence type="ECO:0000250" key="2">
    <source>
        <dbReference type="UniProtKB" id="P24482"/>
    </source>
</evidence>
<evidence type="ECO:0000256" key="3">
    <source>
        <dbReference type="SAM" id="MobiDB-lite"/>
    </source>
</evidence>
<evidence type="ECO:0000305" key="4"/>
<reference key="1">
    <citation type="journal article" date="2004" name="Nature">
        <title>Genome evolution in yeasts.</title>
        <authorList>
            <person name="Dujon B."/>
            <person name="Sherman D."/>
            <person name="Fischer G."/>
            <person name="Durrens P."/>
            <person name="Casaregola S."/>
            <person name="Lafontaine I."/>
            <person name="de Montigny J."/>
            <person name="Marck C."/>
            <person name="Neuveglise C."/>
            <person name="Talla E."/>
            <person name="Goffard N."/>
            <person name="Frangeul L."/>
            <person name="Aigle M."/>
            <person name="Anthouard V."/>
            <person name="Babour A."/>
            <person name="Barbe V."/>
            <person name="Barnay S."/>
            <person name="Blanchin S."/>
            <person name="Beckerich J.-M."/>
            <person name="Beyne E."/>
            <person name="Bleykasten C."/>
            <person name="Boisrame A."/>
            <person name="Boyer J."/>
            <person name="Cattolico L."/>
            <person name="Confanioleri F."/>
            <person name="de Daruvar A."/>
            <person name="Despons L."/>
            <person name="Fabre E."/>
            <person name="Fairhead C."/>
            <person name="Ferry-Dumazet H."/>
            <person name="Groppi A."/>
            <person name="Hantraye F."/>
            <person name="Hennequin C."/>
            <person name="Jauniaux N."/>
            <person name="Joyet P."/>
            <person name="Kachouri R."/>
            <person name="Kerrest A."/>
            <person name="Koszul R."/>
            <person name="Lemaire M."/>
            <person name="Lesur I."/>
            <person name="Ma L."/>
            <person name="Muller H."/>
            <person name="Nicaud J.-M."/>
            <person name="Nikolski M."/>
            <person name="Oztas S."/>
            <person name="Ozier-Kalogeropoulos O."/>
            <person name="Pellenz S."/>
            <person name="Potier S."/>
            <person name="Richard G.-F."/>
            <person name="Straub M.-L."/>
            <person name="Suleau A."/>
            <person name="Swennen D."/>
            <person name="Tekaia F."/>
            <person name="Wesolowski-Louvel M."/>
            <person name="Westhof E."/>
            <person name="Wirth B."/>
            <person name="Zeniou-Meyer M."/>
            <person name="Zivanovic Y."/>
            <person name="Bolotin-Fukuhara M."/>
            <person name="Thierry A."/>
            <person name="Bouchier C."/>
            <person name="Caudron B."/>
            <person name="Scarpelli C."/>
            <person name="Gaillardin C."/>
            <person name="Weissenbach J."/>
            <person name="Wincker P."/>
            <person name="Souciet J.-L."/>
        </authorList>
    </citation>
    <scope>NUCLEOTIDE SEQUENCE [LARGE SCALE GENOMIC DNA]</scope>
    <source>
        <strain>ATCC 8585 / CBS 2359 / DSM 70799 / NBRC 1267 / NRRL Y-1140 / WM37</strain>
    </source>
</reference>
<organism>
    <name type="scientific">Kluyveromyces lactis (strain ATCC 8585 / CBS 2359 / DSM 70799 / NBRC 1267 / NRRL Y-1140 / WM37)</name>
    <name type="common">Yeast</name>
    <name type="synonym">Candida sphaerica</name>
    <dbReference type="NCBI Taxonomy" id="284590"/>
    <lineage>
        <taxon>Eukaryota</taxon>
        <taxon>Fungi</taxon>
        <taxon>Dikarya</taxon>
        <taxon>Ascomycota</taxon>
        <taxon>Saccharomycotina</taxon>
        <taxon>Saccharomycetes</taxon>
        <taxon>Saccharomycetales</taxon>
        <taxon>Saccharomycetaceae</taxon>
        <taxon>Kluyveromyces</taxon>
    </lineage>
</organism>
<feature type="chain" id="PRO_0000071570" description="DNA polymerase epsilon subunit B">
    <location>
        <begin position="1"/>
        <end position="710"/>
    </location>
</feature>
<feature type="region of interest" description="Disordered" evidence="3">
    <location>
        <begin position="116"/>
        <end position="167"/>
    </location>
</feature>
<feature type="compositionally biased region" description="Polar residues" evidence="3">
    <location>
        <begin position="121"/>
        <end position="144"/>
    </location>
</feature>
<dbReference type="EMBL" id="CR382125">
    <property type="protein sequence ID" value="CAG99248.1"/>
    <property type="molecule type" value="Genomic_DNA"/>
</dbReference>
<dbReference type="RefSeq" id="XP_454161.1">
    <property type="nucleotide sequence ID" value="XM_454161.1"/>
</dbReference>
<dbReference type="SMR" id="Q6CPH8"/>
<dbReference type="FunCoup" id="Q6CPH8">
    <property type="interactions" value="826"/>
</dbReference>
<dbReference type="STRING" id="284590.Q6CPH8"/>
<dbReference type="PaxDb" id="284590-Q6CPH8"/>
<dbReference type="KEGG" id="kla:KLLA0_E04775g"/>
<dbReference type="eggNOG" id="KOG3818">
    <property type="taxonomic scope" value="Eukaryota"/>
</dbReference>
<dbReference type="HOGENOM" id="CLU_010628_1_0_1"/>
<dbReference type="InParanoid" id="Q6CPH8"/>
<dbReference type="OMA" id="PEDGAWF"/>
<dbReference type="Proteomes" id="UP000000598">
    <property type="component" value="Chromosome E"/>
</dbReference>
<dbReference type="GO" id="GO:0008622">
    <property type="term" value="C:epsilon DNA polymerase complex"/>
    <property type="evidence" value="ECO:0007669"/>
    <property type="project" value="InterPro"/>
</dbReference>
<dbReference type="GO" id="GO:0003677">
    <property type="term" value="F:DNA binding"/>
    <property type="evidence" value="ECO:0007669"/>
    <property type="project" value="UniProtKB-KW"/>
</dbReference>
<dbReference type="GO" id="GO:0006261">
    <property type="term" value="P:DNA-templated DNA replication"/>
    <property type="evidence" value="ECO:0007669"/>
    <property type="project" value="InterPro"/>
</dbReference>
<dbReference type="GO" id="GO:0042276">
    <property type="term" value="P:error-prone translesion synthesis"/>
    <property type="evidence" value="ECO:0007669"/>
    <property type="project" value="TreeGrafter"/>
</dbReference>
<dbReference type="InterPro" id="IPR007185">
    <property type="entry name" value="DNA_pol_a/d/e_bsu"/>
</dbReference>
<dbReference type="InterPro" id="IPR016266">
    <property type="entry name" value="POLE2"/>
</dbReference>
<dbReference type="PANTHER" id="PTHR12708:SF0">
    <property type="entry name" value="DNA POLYMERASE EPSILON SUBUNIT 2"/>
    <property type="match status" value="1"/>
</dbReference>
<dbReference type="PANTHER" id="PTHR12708">
    <property type="entry name" value="DNA POLYMERASE EPSILON SUBUNIT B"/>
    <property type="match status" value="1"/>
</dbReference>
<dbReference type="Pfam" id="PF04042">
    <property type="entry name" value="DNA_pol_E_B"/>
    <property type="match status" value="1"/>
</dbReference>
<protein>
    <recommendedName>
        <fullName>DNA polymerase epsilon subunit B</fullName>
    </recommendedName>
    <alternativeName>
        <fullName>DNA polymerase II subunit 2</fullName>
    </alternativeName>
</protein>
<accession>Q6CPH8</accession>
<proteinExistence type="inferred from homology"/>
<keyword id="KW-0235">DNA replication</keyword>
<keyword id="KW-0238">DNA-binding</keyword>
<keyword id="KW-0539">Nucleus</keyword>
<keyword id="KW-1185">Reference proteome</keyword>
<gene>
    <name type="primary">DPB2</name>
    <name type="ordered locus">KLLA0E04697g</name>
</gene>
<name>DPB2_KLULA</name>